<proteinExistence type="inferred from homology"/>
<keyword id="KW-0963">Cytoplasm</keyword>
<keyword id="KW-0687">Ribonucleoprotein</keyword>
<keyword id="KW-0689">Ribosomal protein</keyword>
<name>RS3A_CHLRE</name>
<evidence type="ECO:0000255" key="1">
    <source>
        <dbReference type="HAMAP-Rule" id="MF_03122"/>
    </source>
</evidence>
<evidence type="ECO:0000256" key="2">
    <source>
        <dbReference type="SAM" id="MobiDB-lite"/>
    </source>
</evidence>
<evidence type="ECO:0000305" key="3"/>
<reference key="1">
    <citation type="journal article" date="2007" name="Science">
        <title>The Chlamydomonas genome reveals the evolution of key animal and plant functions.</title>
        <authorList>
            <person name="Merchant S.S."/>
            <person name="Prochnik S.E."/>
            <person name="Vallon O."/>
            <person name="Harris E.H."/>
            <person name="Karpowicz S.J."/>
            <person name="Witman G.B."/>
            <person name="Terry A."/>
            <person name="Salamov A."/>
            <person name="Fritz-Laylin L.K."/>
            <person name="Marechal-Drouard L."/>
            <person name="Marshall W.F."/>
            <person name="Qu L.H."/>
            <person name="Nelson D.R."/>
            <person name="Sanderfoot A.A."/>
            <person name="Spalding M.H."/>
            <person name="Kapitonov V.V."/>
            <person name="Ren Q."/>
            <person name="Ferris P."/>
            <person name="Lindquist E."/>
            <person name="Shapiro H."/>
            <person name="Lucas S.M."/>
            <person name="Grimwood J."/>
            <person name="Schmutz J."/>
            <person name="Cardol P."/>
            <person name="Cerutti H."/>
            <person name="Chanfreau G."/>
            <person name="Chen C.L."/>
            <person name="Cognat V."/>
            <person name="Croft M.T."/>
            <person name="Dent R."/>
            <person name="Dutcher S."/>
            <person name="Fernandez E."/>
            <person name="Fukuzawa H."/>
            <person name="Gonzalez-Ballester D."/>
            <person name="Gonzalez-Halphen D."/>
            <person name="Hallmann A."/>
            <person name="Hanikenne M."/>
            <person name="Hippler M."/>
            <person name="Inwood W."/>
            <person name="Jabbari K."/>
            <person name="Kalanon M."/>
            <person name="Kuras R."/>
            <person name="Lefebvre P.A."/>
            <person name="Lemaire S.D."/>
            <person name="Lobanov A.V."/>
            <person name="Lohr M."/>
            <person name="Manuell A."/>
            <person name="Meier I."/>
            <person name="Mets L."/>
            <person name="Mittag M."/>
            <person name="Mittelmeier T."/>
            <person name="Moroney J.V."/>
            <person name="Moseley J."/>
            <person name="Napoli C."/>
            <person name="Nedelcu A.M."/>
            <person name="Niyogi K."/>
            <person name="Novoselov S.V."/>
            <person name="Paulsen I.T."/>
            <person name="Pazour G.J."/>
            <person name="Purton S."/>
            <person name="Ral J.P."/>
            <person name="Riano-Pachon D.M."/>
            <person name="Riekhof W."/>
            <person name="Rymarquis L."/>
            <person name="Schroda M."/>
            <person name="Stern D."/>
            <person name="Umen J."/>
            <person name="Willows R."/>
            <person name="Wilson N."/>
            <person name="Zimmer S.L."/>
            <person name="Allmer J."/>
            <person name="Balk J."/>
            <person name="Bisova K."/>
            <person name="Chen C.J."/>
            <person name="Elias M."/>
            <person name="Gendler K."/>
            <person name="Hauser C."/>
            <person name="Lamb M.R."/>
            <person name="Ledford H."/>
            <person name="Long J.C."/>
            <person name="Minagawa J."/>
            <person name="Page M.D."/>
            <person name="Pan J."/>
            <person name="Pootakham W."/>
            <person name="Roje S."/>
            <person name="Rose A."/>
            <person name="Stahlberg E."/>
            <person name="Terauchi A.M."/>
            <person name="Yang P."/>
            <person name="Ball S."/>
            <person name="Bowler C."/>
            <person name="Dieckmann C.L."/>
            <person name="Gladyshev V.N."/>
            <person name="Green P."/>
            <person name="Jorgensen R."/>
            <person name="Mayfield S."/>
            <person name="Mueller-Roeber B."/>
            <person name="Rajamani S."/>
            <person name="Sayre R.T."/>
            <person name="Brokstein P."/>
            <person name="Dubchak I."/>
            <person name="Goodstein D."/>
            <person name="Hornick L."/>
            <person name="Huang Y.W."/>
            <person name="Jhaveri J."/>
            <person name="Luo Y."/>
            <person name="Martinez D."/>
            <person name="Ngau W.C."/>
            <person name="Otillar B."/>
            <person name="Poliakov A."/>
            <person name="Porter A."/>
            <person name="Szajkowski L."/>
            <person name="Werner G."/>
            <person name="Zhou K."/>
            <person name="Grigoriev I.V."/>
            <person name="Rokhsar D.S."/>
            <person name="Grossman A.R."/>
        </authorList>
    </citation>
    <scope>NUCLEOTIDE SEQUENCE [LARGE SCALE GENOMIC DNA]</scope>
    <source>
        <strain>CC-503</strain>
        <strain>cw92</strain>
    </source>
</reference>
<comment type="subunit">
    <text evidence="1">Component of the small ribosomal subunit. Mature ribosomes consist of a small (40S) and a large (60S) subunit. The 40S subunit contains about 33 different proteins and 1 molecule of RNA (18S). The 60S subunit contains about 49 different proteins and 3 molecules of RNA (25S, 5.8S and 5S).</text>
</comment>
<comment type="subcellular location">
    <subcellularLocation>
        <location evidence="1">Cytoplasm</location>
    </subcellularLocation>
</comment>
<comment type="similarity">
    <text evidence="1">Belongs to the eukaryotic ribosomal protein eS1 family.</text>
</comment>
<gene>
    <name type="ORF">CHLREDRAFT_168484</name>
</gene>
<protein>
    <recommendedName>
        <fullName evidence="1">Small ribosomal subunit protein eS1</fullName>
    </recommendedName>
    <alternativeName>
        <fullName evidence="3">40S ribosomal protein S3a</fullName>
    </alternativeName>
</protein>
<dbReference type="EMBL" id="DS496109">
    <property type="protein sequence ID" value="EDP08964.1"/>
    <property type="molecule type" value="Genomic_DNA"/>
</dbReference>
<dbReference type="RefSeq" id="XP_001693710.1">
    <property type="nucleotide sequence ID" value="XM_001693658.1"/>
</dbReference>
<dbReference type="SMR" id="A8HS48"/>
<dbReference type="PaxDb" id="3055-EDP08964"/>
<dbReference type="ProMEX" id="A8HS48"/>
<dbReference type="EnsemblPlants" id="PNW73691">
    <property type="protein sequence ID" value="PNW73691"/>
    <property type="gene ID" value="CHLRE_13g568650v5"/>
</dbReference>
<dbReference type="GeneID" id="5719095"/>
<dbReference type="Gramene" id="PNW73691">
    <property type="protein sequence ID" value="PNW73691"/>
    <property type="gene ID" value="CHLRE_13g568650v5"/>
</dbReference>
<dbReference type="KEGG" id="cre:CHLRE_13g568650v5"/>
<dbReference type="eggNOG" id="KOG1628">
    <property type="taxonomic scope" value="Eukaryota"/>
</dbReference>
<dbReference type="HOGENOM" id="CLU_062507_0_0_1"/>
<dbReference type="OMA" id="MCEIITR"/>
<dbReference type="OrthoDB" id="9834376at2759"/>
<dbReference type="GO" id="GO:0022627">
    <property type="term" value="C:cytosolic small ribosomal subunit"/>
    <property type="evidence" value="ECO:0007669"/>
    <property type="project" value="UniProtKB-UniRule"/>
</dbReference>
<dbReference type="GO" id="GO:0003735">
    <property type="term" value="F:structural constituent of ribosome"/>
    <property type="evidence" value="ECO:0007669"/>
    <property type="project" value="UniProtKB-UniRule"/>
</dbReference>
<dbReference type="GO" id="GO:0006412">
    <property type="term" value="P:translation"/>
    <property type="evidence" value="ECO:0007669"/>
    <property type="project" value="UniProtKB-UniRule"/>
</dbReference>
<dbReference type="HAMAP" id="MF_03122">
    <property type="entry name" value="Ribosomal_eS1_euk"/>
    <property type="match status" value="1"/>
</dbReference>
<dbReference type="InterPro" id="IPR001593">
    <property type="entry name" value="Ribosomal_eS1"/>
</dbReference>
<dbReference type="InterPro" id="IPR018281">
    <property type="entry name" value="Ribosomal_eS1_CS"/>
</dbReference>
<dbReference type="InterPro" id="IPR027500">
    <property type="entry name" value="Ribosomal_eS1_euk"/>
</dbReference>
<dbReference type="PANTHER" id="PTHR11830">
    <property type="entry name" value="40S RIBOSOMAL PROTEIN S3A"/>
    <property type="match status" value="1"/>
</dbReference>
<dbReference type="Pfam" id="PF01015">
    <property type="entry name" value="Ribosomal_S3Ae"/>
    <property type="match status" value="1"/>
</dbReference>
<dbReference type="SMART" id="SM01397">
    <property type="entry name" value="Ribosomal_S3Ae"/>
    <property type="match status" value="1"/>
</dbReference>
<dbReference type="PROSITE" id="PS01191">
    <property type="entry name" value="RIBOSOMAL_S3AE"/>
    <property type="match status" value="1"/>
</dbReference>
<sequence>MAVGKNKRISKGKKGGKKKASDPFAKKDWYDIKAPTMFTVRNVGKTLVTRTQGTKIASEALKGRVFEVSLADLQKNEDDAFRKMRLRVEDVQGRNCLTNFWGMDFTTDKLRSLVRKWQTLIEAHVDVKTTDGYTLRVFCISFTKKRQGQIKRTCYAQSAQIRQIRKKMMEIITREATSCDLKELVAKFIPESIGKDIEKSCQGIYPLQNTFIRKVKVLKAPKFDITKLMEVHGDYSEEVGAKIERPAAAAPAVEEAATA</sequence>
<organism>
    <name type="scientific">Chlamydomonas reinhardtii</name>
    <name type="common">Chlamydomonas smithii</name>
    <dbReference type="NCBI Taxonomy" id="3055"/>
    <lineage>
        <taxon>Eukaryota</taxon>
        <taxon>Viridiplantae</taxon>
        <taxon>Chlorophyta</taxon>
        <taxon>core chlorophytes</taxon>
        <taxon>Chlorophyceae</taxon>
        <taxon>CS clade</taxon>
        <taxon>Chlamydomonadales</taxon>
        <taxon>Chlamydomonadaceae</taxon>
        <taxon>Chlamydomonas</taxon>
    </lineage>
</organism>
<feature type="initiator methionine" description="Removed" evidence="1">
    <location>
        <position position="1"/>
    </location>
</feature>
<feature type="chain" id="PRO_0000389327" description="Small ribosomal subunit protein eS1">
    <location>
        <begin position="2"/>
        <end position="259"/>
    </location>
</feature>
<feature type="region of interest" description="Disordered" evidence="2">
    <location>
        <begin position="1"/>
        <end position="22"/>
    </location>
</feature>
<feature type="compositionally biased region" description="Basic residues" evidence="2">
    <location>
        <begin position="1"/>
        <end position="18"/>
    </location>
</feature>
<accession>A8HS48</accession>